<keyword id="KW-0002">3D-structure</keyword>
<keyword id="KW-0025">Alternative splicing</keyword>
<keyword id="KW-0963">Cytoplasm</keyword>
<keyword id="KW-0539">Nucleus</keyword>
<keyword id="KW-0597">Phosphoprotein</keyword>
<keyword id="KW-1267">Proteomics identification</keyword>
<keyword id="KW-1185">Reference proteome</keyword>
<keyword id="KW-0677">Repeat</keyword>
<keyword id="KW-0698">rRNA processing</keyword>
<keyword id="KW-0853">WD repeat</keyword>
<sequence length="383" mass="42070">MDRTCEERPAEDGSDEEDPDSMEAPTRIRDTPEDIVLEAPASGLAFHPARDLLAAGDVDGDVFVFSYSCQEGETKELWSSGHHLKACRAVAFSEDGQKLITVSKDKAIHVLDVEQGQLERRVSKAHGAPINSLLLVDENVLATGDDTGGICLWDQRKEGPLMDMRQHEEYIADMALDPAKKLLLTASGDGCLGIFNIKRRRFELLSEPQSGDLTSVTLMKWGKKVACGSSEGTIYLFNWNGFGATSDRFALRAESIDCMVPVTESLLCTGSTDGVIRAVNILPNRVVGSVGQHTGEPVEELALSHCGRFLASSGHDQRLKFWDMAQLRAVVVDDYRRRKKKGGPLRALSSKTWSTDDFFAGLREEGEDSMAQEEKEETGDDSD</sequence>
<evidence type="ECO:0000250" key="1"/>
<evidence type="ECO:0000256" key="2">
    <source>
        <dbReference type="SAM" id="MobiDB-lite"/>
    </source>
</evidence>
<evidence type="ECO:0000269" key="3">
    <source>
    </source>
</evidence>
<evidence type="ECO:0000269" key="4">
    <source>
    </source>
</evidence>
<evidence type="ECO:0000303" key="5">
    <source>
    </source>
</evidence>
<evidence type="ECO:0000305" key="6"/>
<evidence type="ECO:0007744" key="7">
    <source>
    </source>
</evidence>
<evidence type="ECO:0007744" key="8">
    <source>
    </source>
</evidence>
<evidence type="ECO:0007744" key="9">
    <source>
    </source>
</evidence>
<evidence type="ECO:0007744" key="10">
    <source>
    </source>
</evidence>
<evidence type="ECO:0007829" key="11">
    <source>
        <dbReference type="PDB" id="7KQQ"/>
    </source>
</evidence>
<accession>Q9H6Y2</accession>
<accession>Q9NXK4</accession>
<name>WDR55_HUMAN</name>
<reference key="1">
    <citation type="journal article" date="2004" name="Nat. Genet.">
        <title>Complete sequencing and characterization of 21,243 full-length human cDNAs.</title>
        <authorList>
            <person name="Ota T."/>
            <person name="Suzuki Y."/>
            <person name="Nishikawa T."/>
            <person name="Otsuki T."/>
            <person name="Sugiyama T."/>
            <person name="Irie R."/>
            <person name="Wakamatsu A."/>
            <person name="Hayashi K."/>
            <person name="Sato H."/>
            <person name="Nagai K."/>
            <person name="Kimura K."/>
            <person name="Makita H."/>
            <person name="Sekine M."/>
            <person name="Obayashi M."/>
            <person name="Nishi T."/>
            <person name="Shibahara T."/>
            <person name="Tanaka T."/>
            <person name="Ishii S."/>
            <person name="Yamamoto J."/>
            <person name="Saito K."/>
            <person name="Kawai Y."/>
            <person name="Isono Y."/>
            <person name="Nakamura Y."/>
            <person name="Nagahari K."/>
            <person name="Murakami K."/>
            <person name="Yasuda T."/>
            <person name="Iwayanagi T."/>
            <person name="Wagatsuma M."/>
            <person name="Shiratori A."/>
            <person name="Sudo H."/>
            <person name="Hosoiri T."/>
            <person name="Kaku Y."/>
            <person name="Kodaira H."/>
            <person name="Kondo H."/>
            <person name="Sugawara M."/>
            <person name="Takahashi M."/>
            <person name="Kanda K."/>
            <person name="Yokoi T."/>
            <person name="Furuya T."/>
            <person name="Kikkawa E."/>
            <person name="Omura Y."/>
            <person name="Abe K."/>
            <person name="Kamihara K."/>
            <person name="Katsuta N."/>
            <person name="Sato K."/>
            <person name="Tanikawa M."/>
            <person name="Yamazaki M."/>
            <person name="Ninomiya K."/>
            <person name="Ishibashi T."/>
            <person name="Yamashita H."/>
            <person name="Murakawa K."/>
            <person name="Fujimori K."/>
            <person name="Tanai H."/>
            <person name="Kimata M."/>
            <person name="Watanabe M."/>
            <person name="Hiraoka S."/>
            <person name="Chiba Y."/>
            <person name="Ishida S."/>
            <person name="Ono Y."/>
            <person name="Takiguchi S."/>
            <person name="Watanabe S."/>
            <person name="Yosida M."/>
            <person name="Hotuta T."/>
            <person name="Kusano J."/>
            <person name="Kanehori K."/>
            <person name="Takahashi-Fujii A."/>
            <person name="Hara H."/>
            <person name="Tanase T.-O."/>
            <person name="Nomura Y."/>
            <person name="Togiya S."/>
            <person name="Komai F."/>
            <person name="Hara R."/>
            <person name="Takeuchi K."/>
            <person name="Arita M."/>
            <person name="Imose N."/>
            <person name="Musashino K."/>
            <person name="Yuuki H."/>
            <person name="Oshima A."/>
            <person name="Sasaki N."/>
            <person name="Aotsuka S."/>
            <person name="Yoshikawa Y."/>
            <person name="Matsunawa H."/>
            <person name="Ichihara T."/>
            <person name="Shiohata N."/>
            <person name="Sano S."/>
            <person name="Moriya S."/>
            <person name="Momiyama H."/>
            <person name="Satoh N."/>
            <person name="Takami S."/>
            <person name="Terashima Y."/>
            <person name="Suzuki O."/>
            <person name="Nakagawa S."/>
            <person name="Senoh A."/>
            <person name="Mizoguchi H."/>
            <person name="Goto Y."/>
            <person name="Shimizu F."/>
            <person name="Wakebe H."/>
            <person name="Hishigaki H."/>
            <person name="Watanabe T."/>
            <person name="Sugiyama A."/>
            <person name="Takemoto M."/>
            <person name="Kawakami B."/>
            <person name="Yamazaki M."/>
            <person name="Watanabe K."/>
            <person name="Kumagai A."/>
            <person name="Itakura S."/>
            <person name="Fukuzumi Y."/>
            <person name="Fujimori Y."/>
            <person name="Komiyama M."/>
            <person name="Tashiro H."/>
            <person name="Tanigami A."/>
            <person name="Fujiwara T."/>
            <person name="Ono T."/>
            <person name="Yamada K."/>
            <person name="Fujii Y."/>
            <person name="Ozaki K."/>
            <person name="Hirao M."/>
            <person name="Ohmori Y."/>
            <person name="Kawabata A."/>
            <person name="Hikiji T."/>
            <person name="Kobatake N."/>
            <person name="Inagaki H."/>
            <person name="Ikema Y."/>
            <person name="Okamoto S."/>
            <person name="Okitani R."/>
            <person name="Kawakami T."/>
            <person name="Noguchi S."/>
            <person name="Itoh T."/>
            <person name="Shigeta K."/>
            <person name="Senba T."/>
            <person name="Matsumura K."/>
            <person name="Nakajima Y."/>
            <person name="Mizuno T."/>
            <person name="Morinaga M."/>
            <person name="Sasaki M."/>
            <person name="Togashi T."/>
            <person name="Oyama M."/>
            <person name="Hata H."/>
            <person name="Watanabe M."/>
            <person name="Komatsu T."/>
            <person name="Mizushima-Sugano J."/>
            <person name="Satoh T."/>
            <person name="Shirai Y."/>
            <person name="Takahashi Y."/>
            <person name="Nakagawa K."/>
            <person name="Okumura K."/>
            <person name="Nagase T."/>
            <person name="Nomura N."/>
            <person name="Kikuchi H."/>
            <person name="Masuho Y."/>
            <person name="Yamashita R."/>
            <person name="Nakai K."/>
            <person name="Yada T."/>
            <person name="Nakamura Y."/>
            <person name="Ohara O."/>
            <person name="Isogai T."/>
            <person name="Sugano S."/>
        </authorList>
    </citation>
    <scope>NUCLEOTIDE SEQUENCE [LARGE SCALE MRNA] (ISOFORMS 1 AND 2)</scope>
    <scope>VARIANT ARG-151</scope>
    <source>
        <tissue>Colon</tissue>
        <tissue>Colon mucosa</tissue>
    </source>
</reference>
<reference key="2">
    <citation type="journal article" date="2004" name="Nature">
        <title>The DNA sequence and comparative analysis of human chromosome 5.</title>
        <authorList>
            <person name="Schmutz J."/>
            <person name="Martin J."/>
            <person name="Terry A."/>
            <person name="Couronne O."/>
            <person name="Grimwood J."/>
            <person name="Lowry S."/>
            <person name="Gordon L.A."/>
            <person name="Scott D."/>
            <person name="Xie G."/>
            <person name="Huang W."/>
            <person name="Hellsten U."/>
            <person name="Tran-Gyamfi M."/>
            <person name="She X."/>
            <person name="Prabhakar S."/>
            <person name="Aerts A."/>
            <person name="Altherr M."/>
            <person name="Bajorek E."/>
            <person name="Black S."/>
            <person name="Branscomb E."/>
            <person name="Caoile C."/>
            <person name="Challacombe J.F."/>
            <person name="Chan Y.M."/>
            <person name="Denys M."/>
            <person name="Detter J.C."/>
            <person name="Escobar J."/>
            <person name="Flowers D."/>
            <person name="Fotopulos D."/>
            <person name="Glavina T."/>
            <person name="Gomez M."/>
            <person name="Gonzales E."/>
            <person name="Goodstein D."/>
            <person name="Grigoriev I."/>
            <person name="Groza M."/>
            <person name="Hammon N."/>
            <person name="Hawkins T."/>
            <person name="Haydu L."/>
            <person name="Israni S."/>
            <person name="Jett J."/>
            <person name="Kadner K."/>
            <person name="Kimball H."/>
            <person name="Kobayashi A."/>
            <person name="Lopez F."/>
            <person name="Lou Y."/>
            <person name="Martinez D."/>
            <person name="Medina C."/>
            <person name="Morgan J."/>
            <person name="Nandkeshwar R."/>
            <person name="Noonan J.P."/>
            <person name="Pitluck S."/>
            <person name="Pollard M."/>
            <person name="Predki P."/>
            <person name="Priest J."/>
            <person name="Ramirez L."/>
            <person name="Retterer J."/>
            <person name="Rodriguez A."/>
            <person name="Rogers S."/>
            <person name="Salamov A."/>
            <person name="Salazar A."/>
            <person name="Thayer N."/>
            <person name="Tice H."/>
            <person name="Tsai M."/>
            <person name="Ustaszewska A."/>
            <person name="Vo N."/>
            <person name="Wheeler J."/>
            <person name="Wu K."/>
            <person name="Yang J."/>
            <person name="Dickson M."/>
            <person name="Cheng J.-F."/>
            <person name="Eichler E.E."/>
            <person name="Olsen A."/>
            <person name="Pennacchio L.A."/>
            <person name="Rokhsar D.S."/>
            <person name="Richardson P."/>
            <person name="Lucas S.M."/>
            <person name="Myers R.M."/>
            <person name="Rubin E.M."/>
        </authorList>
    </citation>
    <scope>NUCLEOTIDE SEQUENCE [LARGE SCALE GENOMIC DNA]</scope>
</reference>
<reference key="3">
    <citation type="journal article" date="2004" name="Genome Res.">
        <title>The status, quality, and expansion of the NIH full-length cDNA project: the Mammalian Gene Collection (MGC).</title>
        <authorList>
            <consortium name="The MGC Project Team"/>
        </authorList>
    </citation>
    <scope>NUCLEOTIDE SEQUENCE [LARGE SCALE MRNA] (ISOFORM 1)</scope>
    <scope>VARIANT ARG-151</scope>
    <source>
        <tissue>Placenta</tissue>
    </source>
</reference>
<reference key="4">
    <citation type="journal article" date="2008" name="Proc. Natl. Acad. Sci. U.S.A.">
        <title>A quantitative atlas of mitotic phosphorylation.</title>
        <authorList>
            <person name="Dephoure N."/>
            <person name="Zhou C."/>
            <person name="Villen J."/>
            <person name="Beausoleil S.A."/>
            <person name="Bakalarski C.E."/>
            <person name="Elledge S.J."/>
            <person name="Gygi S.P."/>
        </authorList>
    </citation>
    <scope>PHOSPHORYLATION [LARGE SCALE ANALYSIS] AT SER-14; THR-378 AND SER-382</scope>
    <scope>IDENTIFICATION BY MASS SPECTROMETRY [LARGE SCALE ANALYSIS]</scope>
    <source>
        <tissue>Cervix carcinoma</tissue>
    </source>
</reference>
<reference key="5">
    <citation type="journal article" date="2009" name="Sci. Signal.">
        <title>Quantitative phosphoproteomic analysis of T cell receptor signaling reveals system-wide modulation of protein-protein interactions.</title>
        <authorList>
            <person name="Mayya V."/>
            <person name="Lundgren D.H."/>
            <person name="Hwang S.-I."/>
            <person name="Rezaul K."/>
            <person name="Wu L."/>
            <person name="Eng J.K."/>
            <person name="Rodionov V."/>
            <person name="Han D.K."/>
        </authorList>
    </citation>
    <scope>PHOSPHORYLATION [LARGE SCALE ANALYSIS] AT SER-14</scope>
    <scope>IDENTIFICATION BY MASS SPECTROMETRY [LARGE SCALE ANALYSIS]</scope>
    <source>
        <tissue>Leukemic T-cell</tissue>
    </source>
</reference>
<reference key="6">
    <citation type="journal article" date="2010" name="Sci. Signal.">
        <title>Quantitative phosphoproteomics reveals widespread full phosphorylation site occupancy during mitosis.</title>
        <authorList>
            <person name="Olsen J.V."/>
            <person name="Vermeulen M."/>
            <person name="Santamaria A."/>
            <person name="Kumar C."/>
            <person name="Miller M.L."/>
            <person name="Jensen L.J."/>
            <person name="Gnad F."/>
            <person name="Cox J."/>
            <person name="Jensen T.S."/>
            <person name="Nigg E.A."/>
            <person name="Brunak S."/>
            <person name="Mann M."/>
        </authorList>
    </citation>
    <scope>PHOSPHORYLATION [LARGE SCALE ANALYSIS] AT SER-14</scope>
    <scope>IDENTIFICATION BY MASS SPECTROMETRY [LARGE SCALE ANALYSIS]</scope>
    <source>
        <tissue>Cervix carcinoma</tissue>
    </source>
</reference>
<reference key="7">
    <citation type="journal article" date="2011" name="Sci. Signal.">
        <title>System-wide temporal characterization of the proteome and phosphoproteome of human embryonic stem cell differentiation.</title>
        <authorList>
            <person name="Rigbolt K.T."/>
            <person name="Prokhorova T.A."/>
            <person name="Akimov V."/>
            <person name="Henningsen J."/>
            <person name="Johansen P.T."/>
            <person name="Kratchmarova I."/>
            <person name="Kassem M."/>
            <person name="Mann M."/>
            <person name="Olsen J.V."/>
            <person name="Blagoev B."/>
        </authorList>
    </citation>
    <scope>IDENTIFICATION BY MASS SPECTROMETRY [LARGE SCALE ANALYSIS]</scope>
</reference>
<reference key="8">
    <citation type="journal article" date="2013" name="J. Proteome Res.">
        <title>Toward a comprehensive characterization of a human cancer cell phosphoproteome.</title>
        <authorList>
            <person name="Zhou H."/>
            <person name="Di Palma S."/>
            <person name="Preisinger C."/>
            <person name="Peng M."/>
            <person name="Polat A.N."/>
            <person name="Heck A.J."/>
            <person name="Mohammed S."/>
        </authorList>
    </citation>
    <scope>PHOSPHORYLATION [LARGE SCALE ANALYSIS] AT SER-14 AND SER-354</scope>
    <scope>IDENTIFICATION BY MASS SPECTROMETRY [LARGE SCALE ANALYSIS]</scope>
    <source>
        <tissue>Cervix carcinoma</tissue>
        <tissue>Erythroleukemia</tissue>
    </source>
</reference>
<feature type="chain" id="PRO_0000237598" description="WD repeat-containing protein 55">
    <location>
        <begin position="1"/>
        <end position="383"/>
    </location>
</feature>
<feature type="repeat" description="WD 1">
    <location>
        <begin position="36"/>
        <end position="75"/>
    </location>
</feature>
<feature type="repeat" description="WD 2">
    <location>
        <begin position="82"/>
        <end position="121"/>
    </location>
</feature>
<feature type="repeat" description="WD 3">
    <location>
        <begin position="125"/>
        <end position="163"/>
    </location>
</feature>
<feature type="repeat" description="WD 4">
    <location>
        <begin position="166"/>
        <end position="205"/>
    </location>
</feature>
<feature type="repeat" description="WD 5">
    <location>
        <begin position="208"/>
        <end position="247"/>
    </location>
</feature>
<feature type="repeat" description="WD 6">
    <location>
        <begin position="250"/>
        <end position="289"/>
    </location>
</feature>
<feature type="repeat" description="WD 7">
    <location>
        <begin position="293"/>
        <end position="332"/>
    </location>
</feature>
<feature type="region of interest" description="Disordered" evidence="2">
    <location>
        <begin position="1"/>
        <end position="33"/>
    </location>
</feature>
<feature type="region of interest" description="Disordered" evidence="2">
    <location>
        <begin position="363"/>
        <end position="383"/>
    </location>
</feature>
<feature type="compositionally biased region" description="Basic and acidic residues" evidence="2">
    <location>
        <begin position="1"/>
        <end position="11"/>
    </location>
</feature>
<feature type="compositionally biased region" description="Acidic residues" evidence="2">
    <location>
        <begin position="12"/>
        <end position="21"/>
    </location>
</feature>
<feature type="compositionally biased region" description="Acidic residues" evidence="2">
    <location>
        <begin position="365"/>
        <end position="383"/>
    </location>
</feature>
<feature type="modified residue" description="Phosphoserine" evidence="7 8 9 10">
    <location>
        <position position="14"/>
    </location>
</feature>
<feature type="modified residue" description="Phosphoserine" evidence="10">
    <location>
        <position position="354"/>
    </location>
</feature>
<feature type="modified residue" description="Phosphothreonine" evidence="7">
    <location>
        <position position="378"/>
    </location>
</feature>
<feature type="modified residue" description="Phosphoserine" evidence="7">
    <location>
        <position position="382"/>
    </location>
</feature>
<feature type="splice variant" id="VSP_037275" description="In isoform 2." evidence="5">
    <location>
        <begin position="1"/>
        <end position="218"/>
    </location>
</feature>
<feature type="sequence variant" id="VAR_037056" description="In dbSNP:rs34342435.">
    <original>R</original>
    <variation>C</variation>
    <location>
        <position position="50"/>
    </location>
</feature>
<feature type="sequence variant" id="VAR_037057" description="In dbSNP:rs2530245." evidence="3 4">
    <original>C</original>
    <variation>R</variation>
    <location>
        <position position="151"/>
    </location>
</feature>
<feature type="sequence variant" id="VAR_037058" description="In dbSNP:rs2286394.">
    <original>S</original>
    <variation>F</variation>
    <location>
        <position position="210"/>
    </location>
</feature>
<feature type="sequence variant" id="VAR_037059" description="In dbSNP:rs35983033.">
    <original>Y</original>
    <variation>C</variation>
    <location>
        <position position="235"/>
    </location>
</feature>
<feature type="strand" evidence="11">
    <location>
        <begin position="41"/>
        <end position="46"/>
    </location>
</feature>
<feature type="strand" evidence="11">
    <location>
        <begin position="48"/>
        <end position="57"/>
    </location>
</feature>
<feature type="strand" evidence="11">
    <location>
        <begin position="62"/>
        <end position="66"/>
    </location>
</feature>
<feature type="strand" evidence="11">
    <location>
        <begin position="75"/>
        <end position="80"/>
    </location>
</feature>
<feature type="strand" evidence="11">
    <location>
        <begin position="87"/>
        <end position="92"/>
    </location>
</feature>
<feature type="strand" evidence="11">
    <location>
        <begin position="96"/>
        <end position="103"/>
    </location>
</feature>
<feature type="strand" evidence="11">
    <location>
        <begin position="108"/>
        <end position="112"/>
    </location>
</feature>
<feature type="turn" evidence="11">
    <location>
        <begin position="113"/>
        <end position="115"/>
    </location>
</feature>
<feature type="strand" evidence="11">
    <location>
        <begin position="118"/>
        <end position="122"/>
    </location>
</feature>
<feature type="strand" evidence="11">
    <location>
        <begin position="125"/>
        <end position="128"/>
    </location>
</feature>
<feature type="strand" evidence="11">
    <location>
        <begin position="130"/>
        <end position="135"/>
    </location>
</feature>
<feature type="strand" evidence="11">
    <location>
        <begin position="137"/>
        <end position="145"/>
    </location>
</feature>
<feature type="strand" evidence="11">
    <location>
        <begin position="150"/>
        <end position="154"/>
    </location>
</feature>
<feature type="strand" evidence="11">
    <location>
        <begin position="157"/>
        <end position="159"/>
    </location>
</feature>
<feature type="strand" evidence="11">
    <location>
        <begin position="161"/>
        <end position="164"/>
    </location>
</feature>
<feature type="strand" evidence="11">
    <location>
        <begin position="171"/>
        <end position="176"/>
    </location>
</feature>
<feature type="strand" evidence="11">
    <location>
        <begin position="180"/>
        <end position="187"/>
    </location>
</feature>
<feature type="strand" evidence="11">
    <location>
        <begin position="192"/>
        <end position="196"/>
    </location>
</feature>
<feature type="turn" evidence="11">
    <location>
        <begin position="197"/>
        <end position="200"/>
    </location>
</feature>
<feature type="strand" evidence="11">
    <location>
        <begin position="201"/>
        <end position="205"/>
    </location>
</feature>
<feature type="strand" evidence="11">
    <location>
        <begin position="213"/>
        <end position="219"/>
    </location>
</feature>
<feature type="turn" evidence="11">
    <location>
        <begin position="220"/>
        <end position="223"/>
    </location>
</feature>
<feature type="strand" evidence="11">
    <location>
        <begin position="224"/>
        <end position="229"/>
    </location>
</feature>
<feature type="strand" evidence="11">
    <location>
        <begin position="232"/>
        <end position="238"/>
    </location>
</feature>
<feature type="strand" evidence="11">
    <location>
        <begin position="246"/>
        <end position="250"/>
    </location>
</feature>
<feature type="strand" evidence="11">
    <location>
        <begin position="252"/>
        <end position="254"/>
    </location>
</feature>
<feature type="strand" evidence="11">
    <location>
        <begin position="258"/>
        <end position="270"/>
    </location>
</feature>
<feature type="strand" evidence="11">
    <location>
        <begin position="274"/>
        <end position="280"/>
    </location>
</feature>
<feature type="turn" evidence="11">
    <location>
        <begin position="281"/>
        <end position="284"/>
    </location>
</feature>
<feature type="strand" evidence="11">
    <location>
        <begin position="285"/>
        <end position="292"/>
    </location>
</feature>
<feature type="strand" evidence="11">
    <location>
        <begin position="298"/>
        <end position="303"/>
    </location>
</feature>
<feature type="strand" evidence="11">
    <location>
        <begin position="307"/>
        <end position="314"/>
    </location>
</feature>
<feature type="turn" evidence="11">
    <location>
        <begin position="315"/>
        <end position="317"/>
    </location>
</feature>
<feature type="strand" evidence="11">
    <location>
        <begin position="318"/>
        <end position="323"/>
    </location>
</feature>
<feature type="helix" evidence="11">
    <location>
        <begin position="324"/>
        <end position="327"/>
    </location>
</feature>
<proteinExistence type="evidence at protein level"/>
<gene>
    <name type="primary">WDR55</name>
</gene>
<dbReference type="EMBL" id="AK000202">
    <property type="protein sequence ID" value="BAA91006.1"/>
    <property type="molecule type" value="mRNA"/>
</dbReference>
<dbReference type="EMBL" id="AK025355">
    <property type="protein sequence ID" value="BAB15118.1"/>
    <property type="molecule type" value="mRNA"/>
</dbReference>
<dbReference type="EMBL" id="AC116353">
    <property type="status" value="NOT_ANNOTATED_CDS"/>
    <property type="molecule type" value="Genomic_DNA"/>
</dbReference>
<dbReference type="EMBL" id="BC068485">
    <property type="protein sequence ID" value="AAH68485.1"/>
    <property type="molecule type" value="mRNA"/>
</dbReference>
<dbReference type="CCDS" id="CCDS4235.1">
    <molecule id="Q9H6Y2-1"/>
</dbReference>
<dbReference type="RefSeq" id="NP_060176.2">
    <molecule id="Q9H6Y2-1"/>
    <property type="nucleotide sequence ID" value="NM_017706.4"/>
</dbReference>
<dbReference type="RefSeq" id="XP_005268526.1">
    <molecule id="Q9H6Y2-1"/>
    <property type="nucleotide sequence ID" value="XM_005268469.4"/>
</dbReference>
<dbReference type="PDB" id="7KQQ">
    <property type="method" value="X-ray"/>
    <property type="resolution" value="1.80 A"/>
    <property type="chains" value="A/B=21-334"/>
</dbReference>
<dbReference type="PDB" id="8FKY">
    <property type="method" value="EM"/>
    <property type="resolution" value="2.67 A"/>
    <property type="chains" value="BC=1-383"/>
</dbReference>
<dbReference type="PDBsum" id="7KQQ"/>
<dbReference type="PDBsum" id="8FKY"/>
<dbReference type="EMDB" id="EMD-29261"/>
<dbReference type="SMR" id="Q9H6Y2"/>
<dbReference type="BioGRID" id="120203">
    <property type="interactions" value="106"/>
</dbReference>
<dbReference type="FunCoup" id="Q9H6Y2">
    <property type="interactions" value="1791"/>
</dbReference>
<dbReference type="IntAct" id="Q9H6Y2">
    <property type="interactions" value="45"/>
</dbReference>
<dbReference type="MINT" id="Q9H6Y2"/>
<dbReference type="STRING" id="9606.ENSP00000351100"/>
<dbReference type="GlyGen" id="Q9H6Y2">
    <property type="glycosylation" value="1 site, 1 O-linked glycan (1 site)"/>
</dbReference>
<dbReference type="iPTMnet" id="Q9H6Y2"/>
<dbReference type="PhosphoSitePlus" id="Q9H6Y2"/>
<dbReference type="SwissPalm" id="Q9H6Y2"/>
<dbReference type="BioMuta" id="WDR55"/>
<dbReference type="DMDM" id="296453035"/>
<dbReference type="jPOST" id="Q9H6Y2"/>
<dbReference type="MassIVE" id="Q9H6Y2"/>
<dbReference type="PaxDb" id="9606-ENSP00000351100"/>
<dbReference type="PeptideAtlas" id="Q9H6Y2"/>
<dbReference type="ProteomicsDB" id="81057">
    <molecule id="Q9H6Y2-1"/>
</dbReference>
<dbReference type="ProteomicsDB" id="81058">
    <molecule id="Q9H6Y2-2"/>
</dbReference>
<dbReference type="Pumba" id="Q9H6Y2"/>
<dbReference type="Antibodypedia" id="45472">
    <property type="antibodies" value="33 antibodies from 14 providers"/>
</dbReference>
<dbReference type="DNASU" id="54853"/>
<dbReference type="Ensembl" id="ENST00000358337.10">
    <molecule id="Q9H6Y2-1"/>
    <property type="protein sequence ID" value="ENSP00000351100.5"/>
    <property type="gene ID" value="ENSG00000120314.19"/>
</dbReference>
<dbReference type="GeneID" id="54853"/>
<dbReference type="KEGG" id="hsa:54853"/>
<dbReference type="MANE-Select" id="ENST00000358337.10">
    <property type="protein sequence ID" value="ENSP00000351100.5"/>
    <property type="RefSeq nucleotide sequence ID" value="NM_017706.5"/>
    <property type="RefSeq protein sequence ID" value="NP_060176.3"/>
</dbReference>
<dbReference type="UCSC" id="uc003lgr.5">
    <molecule id="Q9H6Y2-1"/>
    <property type="organism name" value="human"/>
</dbReference>
<dbReference type="AGR" id="HGNC:25971"/>
<dbReference type="CTD" id="54853"/>
<dbReference type="GeneCards" id="WDR55"/>
<dbReference type="HGNC" id="HGNC:25971">
    <property type="gene designation" value="WDR55"/>
</dbReference>
<dbReference type="HPA" id="ENSG00000120314">
    <property type="expression patterns" value="Low tissue specificity"/>
</dbReference>
<dbReference type="MIM" id="620832">
    <property type="type" value="gene"/>
</dbReference>
<dbReference type="neXtProt" id="NX_Q9H6Y2"/>
<dbReference type="OpenTargets" id="ENSG00000120314"/>
<dbReference type="PharmGKB" id="PA142670590"/>
<dbReference type="VEuPathDB" id="HostDB:ENSG00000120314"/>
<dbReference type="eggNOG" id="KOG2444">
    <property type="taxonomic scope" value="Eukaryota"/>
</dbReference>
<dbReference type="GeneTree" id="ENSGT00940000153727"/>
<dbReference type="HOGENOM" id="CLU_035848_0_1_1"/>
<dbReference type="InParanoid" id="Q9H6Y2"/>
<dbReference type="OMA" id="QAIHPTE"/>
<dbReference type="OrthoDB" id="2288928at2759"/>
<dbReference type="PAN-GO" id="Q9H6Y2">
    <property type="GO annotations" value="0 GO annotations based on evolutionary models"/>
</dbReference>
<dbReference type="PhylomeDB" id="Q9H6Y2"/>
<dbReference type="TreeFam" id="TF315175"/>
<dbReference type="PathwayCommons" id="Q9H6Y2"/>
<dbReference type="SignaLink" id="Q9H6Y2"/>
<dbReference type="BioGRID-ORCS" id="54853">
    <property type="hits" value="613 hits in 1177 CRISPR screens"/>
</dbReference>
<dbReference type="CD-CODE" id="91857CE7">
    <property type="entry name" value="Nucleolus"/>
</dbReference>
<dbReference type="ChiTaRS" id="WDR55">
    <property type="organism name" value="human"/>
</dbReference>
<dbReference type="GenomeRNAi" id="54853"/>
<dbReference type="Pharos" id="Q9H6Y2">
    <property type="development level" value="Tdark"/>
</dbReference>
<dbReference type="PRO" id="PR:Q9H6Y2"/>
<dbReference type="Proteomes" id="UP000005640">
    <property type="component" value="Chromosome 5"/>
</dbReference>
<dbReference type="RNAct" id="Q9H6Y2">
    <property type="molecule type" value="protein"/>
</dbReference>
<dbReference type="Bgee" id="ENSG00000120314">
    <property type="expression patterns" value="Expressed in granulocyte and 162 other cell types or tissues"/>
</dbReference>
<dbReference type="ExpressionAtlas" id="Q9H6Y2">
    <property type="expression patterns" value="baseline and differential"/>
</dbReference>
<dbReference type="GO" id="GO:0005737">
    <property type="term" value="C:cytoplasm"/>
    <property type="evidence" value="ECO:0007669"/>
    <property type="project" value="UniProtKB-SubCell"/>
</dbReference>
<dbReference type="GO" id="GO:0005730">
    <property type="term" value="C:nucleolus"/>
    <property type="evidence" value="ECO:0000314"/>
    <property type="project" value="HPA"/>
</dbReference>
<dbReference type="GO" id="GO:0005654">
    <property type="term" value="C:nucleoplasm"/>
    <property type="evidence" value="ECO:0000314"/>
    <property type="project" value="HPA"/>
</dbReference>
<dbReference type="GO" id="GO:0006364">
    <property type="term" value="P:rRNA processing"/>
    <property type="evidence" value="ECO:0000250"/>
    <property type="project" value="UniProtKB"/>
</dbReference>
<dbReference type="FunFam" id="2.130.10.10:FF:000333">
    <property type="entry name" value="WD repeat-containing protein 55"/>
    <property type="match status" value="1"/>
</dbReference>
<dbReference type="FunFam" id="2.130.10.10:FF:000389">
    <property type="entry name" value="WD repeat-containing protein 55"/>
    <property type="match status" value="1"/>
</dbReference>
<dbReference type="Gene3D" id="2.130.10.10">
    <property type="entry name" value="YVTN repeat-like/Quinoprotein amine dehydrogenase"/>
    <property type="match status" value="2"/>
</dbReference>
<dbReference type="InterPro" id="IPR015943">
    <property type="entry name" value="WD40/YVTN_repeat-like_dom_sf"/>
</dbReference>
<dbReference type="InterPro" id="IPR019775">
    <property type="entry name" value="WD40_repeat_CS"/>
</dbReference>
<dbReference type="InterPro" id="IPR036322">
    <property type="entry name" value="WD40_repeat_dom_sf"/>
</dbReference>
<dbReference type="InterPro" id="IPR001680">
    <property type="entry name" value="WD40_rpt"/>
</dbReference>
<dbReference type="InterPro" id="IPR017422">
    <property type="entry name" value="WDR55"/>
</dbReference>
<dbReference type="InterPro" id="IPR050505">
    <property type="entry name" value="WDR55_POC1"/>
</dbReference>
<dbReference type="PANTHER" id="PTHR44019">
    <property type="entry name" value="WD REPEAT-CONTAINING PROTEIN 55"/>
    <property type="match status" value="1"/>
</dbReference>
<dbReference type="PANTHER" id="PTHR44019:SF20">
    <property type="entry name" value="WD REPEAT-CONTAINING PROTEIN 55"/>
    <property type="match status" value="1"/>
</dbReference>
<dbReference type="Pfam" id="PF24796">
    <property type="entry name" value="WDR55"/>
    <property type="match status" value="1"/>
</dbReference>
<dbReference type="PIRSF" id="PIRSF038169">
    <property type="entry name" value="WD_repeat_p55"/>
    <property type="match status" value="1"/>
</dbReference>
<dbReference type="SMART" id="SM00320">
    <property type="entry name" value="WD40"/>
    <property type="match status" value="6"/>
</dbReference>
<dbReference type="SUPFAM" id="SSF50978">
    <property type="entry name" value="WD40 repeat-like"/>
    <property type="match status" value="1"/>
</dbReference>
<dbReference type="PROSITE" id="PS00678">
    <property type="entry name" value="WD_REPEATS_1"/>
    <property type="match status" value="1"/>
</dbReference>
<dbReference type="PROSITE" id="PS50082">
    <property type="entry name" value="WD_REPEATS_2"/>
    <property type="match status" value="2"/>
</dbReference>
<dbReference type="PROSITE" id="PS50294">
    <property type="entry name" value="WD_REPEATS_REGION"/>
    <property type="match status" value="1"/>
</dbReference>
<organism>
    <name type="scientific">Homo sapiens</name>
    <name type="common">Human</name>
    <dbReference type="NCBI Taxonomy" id="9606"/>
    <lineage>
        <taxon>Eukaryota</taxon>
        <taxon>Metazoa</taxon>
        <taxon>Chordata</taxon>
        <taxon>Craniata</taxon>
        <taxon>Vertebrata</taxon>
        <taxon>Euteleostomi</taxon>
        <taxon>Mammalia</taxon>
        <taxon>Eutheria</taxon>
        <taxon>Euarchontoglires</taxon>
        <taxon>Primates</taxon>
        <taxon>Haplorrhini</taxon>
        <taxon>Catarrhini</taxon>
        <taxon>Hominidae</taxon>
        <taxon>Homo</taxon>
    </lineage>
</organism>
<comment type="function">
    <text evidence="1">Nucleolar protein that acts as a modulator of rRNA synthesis. Plays a central role during organogenesis (By similarity).</text>
</comment>
<comment type="subcellular location">
    <subcellularLocation>
        <location evidence="1">Nucleus</location>
        <location evidence="1">Nucleolus</location>
    </subcellularLocation>
    <subcellularLocation>
        <location evidence="1">Cytoplasm</location>
    </subcellularLocation>
</comment>
<comment type="alternative products">
    <event type="alternative splicing"/>
    <isoform>
        <id>Q9H6Y2-1</id>
        <name>1</name>
        <sequence type="displayed"/>
    </isoform>
    <isoform>
        <id>Q9H6Y2-2</id>
        <name>2</name>
        <sequence type="described" ref="VSP_037275"/>
    </isoform>
</comment>
<comment type="similarity">
    <text evidence="6">Belongs to the WD repeat WDR55 family.</text>
</comment>
<protein>
    <recommendedName>
        <fullName>WD repeat-containing protein 55</fullName>
    </recommendedName>
</protein>